<protein>
    <recommendedName>
        <fullName evidence="4">(S)-2-haloacid dehalogenase 4A</fullName>
        <ecNumber evidence="1">3.8.1.2</ecNumber>
    </recommendedName>
    <alternativeName>
        <fullName>2-haloalkanoic acid dehalogenase IVA</fullName>
    </alternativeName>
    <alternativeName>
        <fullName evidence="3">Halocarboxylic acid halidohydrolase IVA</fullName>
    </alternativeName>
    <alternativeName>
        <fullName>L-2-haloacid dehalogenase IVA</fullName>
    </alternativeName>
</protein>
<keyword id="KW-0002">3D-structure</keyword>
<keyword id="KW-0903">Direct protein sequencing</keyword>
<keyword id="KW-0378">Hydrolase</keyword>
<reference key="1">
    <citation type="journal article" date="1992" name="Biochem. J.">
        <title>Molecular biology of the 2-haloacid halidohydrolase IVa from Pseudomonas cepacia MBA4.</title>
        <authorList>
            <person name="Murdiyatmo U."/>
            <person name="Asmara W."/>
            <person name="Tsang J.S.H."/>
            <person name="Baines A.J."/>
            <person name="Bull A.T."/>
            <person name="Hardman D.J."/>
        </authorList>
    </citation>
    <scope>NUCLEOTIDE SEQUENCE [GENOMIC DNA]</scope>
    <scope>PROTEIN SEQUENCE OF 2-14</scope>
    <scope>FUNCTION</scope>
    <scope>CATALYTIC ACTIVITY</scope>
    <source>
        <strain>MBA4</strain>
    </source>
</reference>
<reference evidence="6 7" key="2">
    <citation type="journal article" date="2007" name="J. Mol. Biol.">
        <title>Crystal structures of the substrate free-enzyme, and reaction intermediate of the HAD superfamily member, haloacid dehalogenase DehIVa from Burkholderia cepacia MBA4.</title>
        <authorList>
            <person name="Schmidberger J.W."/>
            <person name="Wilce J.A."/>
            <person name="Tsang J.S."/>
            <person name="Wilce M.C."/>
        </authorList>
    </citation>
    <scope>X-RAY CRYSTALLOGRAPHY (1.93 ANGSTROMS) OF 2-231 IN COMPLEX WITH (2S)-2-CHLOROPROPANOIC ACID</scope>
    <scope>ACTIVE SITE</scope>
</reference>
<accession>Q51645</accession>
<name>HAD4_BURCE</name>
<organism>
    <name type="scientific">Burkholderia cepacia</name>
    <name type="common">Pseudomonas cepacia</name>
    <dbReference type="NCBI Taxonomy" id="292"/>
    <lineage>
        <taxon>Bacteria</taxon>
        <taxon>Pseudomonadati</taxon>
        <taxon>Pseudomonadota</taxon>
        <taxon>Betaproteobacteria</taxon>
        <taxon>Burkholderiales</taxon>
        <taxon>Burkholderiaceae</taxon>
        <taxon>Burkholderia</taxon>
        <taxon>Burkholderia cepacia complex</taxon>
    </lineage>
</organism>
<feature type="initiator methionine" description="Removed" evidence="1">
    <location>
        <position position="1"/>
    </location>
</feature>
<feature type="chain" id="PRO_0000079162" description="(S)-2-haloacid dehalogenase 4A">
    <location>
        <begin position="2"/>
        <end position="231"/>
    </location>
</feature>
<feature type="region of interest" description="Important for catalytic activity" evidence="5">
    <location>
        <begin position="176"/>
        <end position="181"/>
    </location>
</feature>
<feature type="active site" description="Nucleophile" evidence="2 7">
    <location>
        <position position="11"/>
    </location>
</feature>
<feature type="binding site" evidence="2 7">
    <location>
        <begin position="12"/>
        <end position="13"/>
    </location>
    <ligand>
        <name>an (S)-2-haloacid</name>
        <dbReference type="ChEBI" id="CHEBI:137405"/>
    </ligand>
</feature>
<feature type="binding site" evidence="2 7">
    <location>
        <position position="42"/>
    </location>
    <ligand>
        <name>an (S)-2-haloacid</name>
        <dbReference type="ChEBI" id="CHEBI:137405"/>
    </ligand>
</feature>
<feature type="binding site" evidence="2 7">
    <location>
        <begin position="119"/>
        <end position="120"/>
    </location>
    <ligand>
        <name>an (S)-2-haloacid</name>
        <dbReference type="ChEBI" id="CHEBI:137405"/>
    </ligand>
</feature>
<feature type="site" description="Important for catalytic activity" evidence="5">
    <location>
        <position position="15"/>
    </location>
</feature>
<feature type="site" description="Important for catalytic activity" evidence="5">
    <location>
        <position position="152"/>
    </location>
</feature>
<feature type="site" description="Important for catalytic activity" evidence="5">
    <location>
        <position position="158"/>
    </location>
</feature>
<feature type="strand" evidence="8">
    <location>
        <begin position="7"/>
        <end position="10"/>
    </location>
</feature>
<feature type="turn" evidence="8">
    <location>
        <begin position="14"/>
        <end position="16"/>
    </location>
</feature>
<feature type="helix" evidence="8">
    <location>
        <begin position="21"/>
        <end position="24"/>
    </location>
</feature>
<feature type="helix" evidence="8">
    <location>
        <begin position="27"/>
        <end position="30"/>
    </location>
</feature>
<feature type="helix" evidence="8">
    <location>
        <begin position="34"/>
        <end position="54"/>
    </location>
</feature>
<feature type="helix" evidence="8">
    <location>
        <begin position="61"/>
        <end position="75"/>
    </location>
</feature>
<feature type="helix" evidence="8">
    <location>
        <begin position="81"/>
        <end position="93"/>
    </location>
</feature>
<feature type="helix" evidence="8">
    <location>
        <begin position="101"/>
        <end position="110"/>
    </location>
</feature>
<feature type="strand" evidence="8">
    <location>
        <begin position="114"/>
        <end position="121"/>
    </location>
</feature>
<feature type="helix" evidence="8">
    <location>
        <begin position="123"/>
        <end position="132"/>
    </location>
</feature>
<feature type="helix" evidence="8">
    <location>
        <begin position="136"/>
        <end position="138"/>
    </location>
</feature>
<feature type="strand" evidence="8">
    <location>
        <begin position="140"/>
        <end position="144"/>
    </location>
</feature>
<feature type="helix" evidence="8">
    <location>
        <begin position="145"/>
        <end position="147"/>
    </location>
</feature>
<feature type="helix" evidence="8">
    <location>
        <begin position="155"/>
        <end position="165"/>
    </location>
</feature>
<feature type="helix" evidence="8">
    <location>
        <begin position="169"/>
        <end position="171"/>
    </location>
</feature>
<feature type="strand" evidence="8">
    <location>
        <begin position="172"/>
        <end position="177"/>
    </location>
</feature>
<feature type="helix" evidence="8">
    <location>
        <begin position="179"/>
        <end position="188"/>
    </location>
</feature>
<feature type="strand" evidence="8">
    <location>
        <begin position="191"/>
        <end position="195"/>
    </location>
</feature>
<feature type="strand" evidence="8">
    <location>
        <begin position="210"/>
        <end position="215"/>
    </location>
</feature>
<feature type="helix" evidence="8">
    <location>
        <begin position="216"/>
        <end position="218"/>
    </location>
</feature>
<feature type="helix" evidence="8">
    <location>
        <begin position="219"/>
        <end position="223"/>
    </location>
</feature>
<gene>
    <name evidence="3" type="primary">hdl IVa</name>
</gene>
<evidence type="ECO:0000269" key="1">
    <source>
    </source>
</evidence>
<evidence type="ECO:0000269" key="2">
    <source>
    </source>
</evidence>
<evidence type="ECO:0000303" key="3">
    <source>
    </source>
</evidence>
<evidence type="ECO:0000305" key="4"/>
<evidence type="ECO:0000305" key="5">
    <source>
    </source>
</evidence>
<evidence type="ECO:0007744" key="6">
    <source>
        <dbReference type="PDB" id="2NO4"/>
    </source>
</evidence>
<evidence type="ECO:0007744" key="7">
    <source>
        <dbReference type="PDB" id="2NO5"/>
    </source>
</evidence>
<evidence type="ECO:0007829" key="8">
    <source>
        <dbReference type="PDB" id="2NO4"/>
    </source>
</evidence>
<dbReference type="EC" id="3.8.1.2" evidence="1"/>
<dbReference type="EMBL" id="X66249">
    <property type="protein sequence ID" value="CAA46976.1"/>
    <property type="molecule type" value="Genomic_DNA"/>
</dbReference>
<dbReference type="PIR" id="S29096">
    <property type="entry name" value="S29096"/>
</dbReference>
<dbReference type="PDB" id="2NO4">
    <property type="method" value="X-ray"/>
    <property type="resolution" value="1.93 A"/>
    <property type="chains" value="A/B=2-231"/>
</dbReference>
<dbReference type="PDB" id="2NO5">
    <property type="method" value="X-ray"/>
    <property type="resolution" value="2.60 A"/>
    <property type="chains" value="A/B=2-231"/>
</dbReference>
<dbReference type="PDBsum" id="2NO4"/>
<dbReference type="PDBsum" id="2NO5"/>
<dbReference type="SMR" id="Q51645"/>
<dbReference type="BRENDA" id="3.8.1.2">
    <property type="organism ID" value="1028"/>
</dbReference>
<dbReference type="EvolutionaryTrace" id="Q51645"/>
<dbReference type="GO" id="GO:0018784">
    <property type="term" value="F:(S)-2-haloacid dehalogenase activity"/>
    <property type="evidence" value="ECO:0007669"/>
    <property type="project" value="UniProtKB-EC"/>
</dbReference>
<dbReference type="CDD" id="cd02588">
    <property type="entry name" value="HAD_L2-DEX"/>
    <property type="match status" value="1"/>
</dbReference>
<dbReference type="Gene3D" id="3.40.50.1000">
    <property type="entry name" value="HAD superfamily/HAD-like"/>
    <property type="match status" value="1"/>
</dbReference>
<dbReference type="Gene3D" id="1.10.150.240">
    <property type="entry name" value="Putative phosphatase, domain 2"/>
    <property type="match status" value="1"/>
</dbReference>
<dbReference type="InterPro" id="IPR006328">
    <property type="entry name" value="2-HAD"/>
</dbReference>
<dbReference type="InterPro" id="IPR036412">
    <property type="entry name" value="HAD-like_sf"/>
</dbReference>
<dbReference type="InterPro" id="IPR006439">
    <property type="entry name" value="HAD-SF_hydro_IA"/>
</dbReference>
<dbReference type="InterPro" id="IPR023214">
    <property type="entry name" value="HAD_sf"/>
</dbReference>
<dbReference type="InterPro" id="IPR023198">
    <property type="entry name" value="PGP-like_dom2"/>
</dbReference>
<dbReference type="InterPro" id="IPR051540">
    <property type="entry name" value="S-2-haloacid_dehalogenase"/>
</dbReference>
<dbReference type="NCBIfam" id="TIGR01549">
    <property type="entry name" value="HAD-SF-IA-v1"/>
    <property type="match status" value="1"/>
</dbReference>
<dbReference type="NCBIfam" id="TIGR01493">
    <property type="entry name" value="HAD-SF-IA-v2"/>
    <property type="match status" value="1"/>
</dbReference>
<dbReference type="NCBIfam" id="TIGR01509">
    <property type="entry name" value="HAD-SF-IA-v3"/>
    <property type="match status" value="1"/>
</dbReference>
<dbReference type="NCBIfam" id="TIGR01428">
    <property type="entry name" value="HAD_type_II"/>
    <property type="match status" value="1"/>
</dbReference>
<dbReference type="PANTHER" id="PTHR43316:SF3">
    <property type="entry name" value="HALOACID DEHALOGENASE, TYPE II (AFU_ORTHOLOGUE AFUA_2G07750)-RELATED"/>
    <property type="match status" value="1"/>
</dbReference>
<dbReference type="PANTHER" id="PTHR43316">
    <property type="entry name" value="HYDROLASE, HALOACID DELAHOGENASE-RELATED"/>
    <property type="match status" value="1"/>
</dbReference>
<dbReference type="Pfam" id="PF00702">
    <property type="entry name" value="Hydrolase"/>
    <property type="match status" value="1"/>
</dbReference>
<dbReference type="PRINTS" id="PR00413">
    <property type="entry name" value="HADHALOGNASE"/>
</dbReference>
<dbReference type="SFLD" id="SFLDF00045">
    <property type="entry name" value="2-haloacid_dehalogenase"/>
    <property type="match status" value="1"/>
</dbReference>
<dbReference type="SFLD" id="SFLDS00003">
    <property type="entry name" value="Haloacid_Dehalogenase"/>
    <property type="match status" value="1"/>
</dbReference>
<dbReference type="SUPFAM" id="SSF56784">
    <property type="entry name" value="HAD-like"/>
    <property type="match status" value="1"/>
</dbReference>
<sequence>MVDSLRACVFDAYGTLLDVHSAVMRNADEVGASAEALSMLWRQRQLEYSWTRTLMHQYADFWQLTDEALTFALRTYHLEDRKGLKDRLMSAYKELSAYPDAAETLEKLKSAGYIVAILSNGNDEMLQAALKASKLDRVLDSCLSADDLKIYKPDPRIYQFACDRLGVNPNEVCFVSSNAWDLGGAGKFGFNTVRINRQGNPPEYEFAPLKHQVNSLSELWPLLAKNVTKAA</sequence>
<proteinExistence type="evidence at protein level"/>
<comment type="function">
    <text evidence="1">Catalyzes the hydrolytic dehalogenation of small (S)-2-haloalkanoic acids to yield the corresponding (R)-2-hydroxyalkanoic acids (PubMed:1376111). Acts on acids of short chain lengths, C(2) to C(4), with inversion of configuration at C-3 (PubMed:1376111). Active with 2-halogenated carboxylic acids and converts only the S-isomer (or L-isomer) of 2-chloropropionic acid with inversion of configuration to produce R-lactate (or D-isomer) (PubMed:1376111).</text>
</comment>
<comment type="catalytic activity">
    <reaction evidence="1">
        <text>an (S)-2-haloacid + H2O = a (2R)-2-hydroxycarboxylate + a halide anion + H(+)</text>
        <dbReference type="Rhea" id="RHEA:11192"/>
        <dbReference type="ChEBI" id="CHEBI:15377"/>
        <dbReference type="ChEBI" id="CHEBI:15378"/>
        <dbReference type="ChEBI" id="CHEBI:16042"/>
        <dbReference type="ChEBI" id="CHEBI:58314"/>
        <dbReference type="ChEBI" id="CHEBI:137405"/>
        <dbReference type="EC" id="3.8.1.2"/>
    </reaction>
</comment>
<comment type="catalytic activity">
    <reaction evidence="1">
        <text>(S)-2-chloropropanoate + H2O = (R)-lactate + chloride + H(+)</text>
        <dbReference type="Rhea" id="RHEA:67956"/>
        <dbReference type="ChEBI" id="CHEBI:15377"/>
        <dbReference type="ChEBI" id="CHEBI:15378"/>
        <dbReference type="ChEBI" id="CHEBI:16004"/>
        <dbReference type="ChEBI" id="CHEBI:17996"/>
        <dbReference type="ChEBI" id="CHEBI:73934"/>
    </reaction>
</comment>
<comment type="biotechnology">
    <text evidence="4">(S)-2-haloacid dehalogenases may be used for the biodegradation of halogenated substances and their derivatives which are widely used as pesticides, herbicides and other industrial products.</text>
</comment>
<comment type="similarity">
    <text evidence="4">Belongs to the HAD-like hydrolase superfamily. S-2-haloalkanoic acid dehalogenase family.</text>
</comment>